<evidence type="ECO:0000250" key="1"/>
<evidence type="ECO:0000305" key="2"/>
<name>RUVV_VACCA</name>
<organism>
    <name type="scientific">Vaccinia virus (strain Ankara)</name>
    <name type="common">VACV</name>
    <dbReference type="NCBI Taxonomy" id="126794"/>
    <lineage>
        <taxon>Viruses</taxon>
        <taxon>Varidnaviria</taxon>
        <taxon>Bamfordvirae</taxon>
        <taxon>Nucleocytoviricota</taxon>
        <taxon>Pokkesviricetes</taxon>
        <taxon>Chitovirales</taxon>
        <taxon>Poxviridae</taxon>
        <taxon>Chordopoxvirinae</taxon>
        <taxon>Orthopoxvirus</taxon>
        <taxon>Vaccinia virus</taxon>
    </lineage>
</organism>
<comment type="function">
    <text evidence="1">Nuclease that specifically cleaves and resolves four-way DNA Holliday junctions into linear duplex products.</text>
</comment>
<comment type="cofactor">
    <cofactor evidence="1">
        <name>Mg(2+)</name>
        <dbReference type="ChEBI" id="CHEBI:18420"/>
    </cofactor>
    <text evidence="1">Binds 1 Mg(2+) ion per subunit.</text>
</comment>
<comment type="subcellular location">
    <subcellularLocation>
        <location evidence="1">Membrane</location>
        <topology evidence="1">Lipid-anchor</topology>
    </subcellularLocation>
</comment>
<comment type="PTM">
    <text evidence="1">Acylated by palmitic acid group(s).</text>
</comment>
<comment type="similarity">
    <text evidence="2">Belongs to the RuvC family. Poxviruses-type subfamily.</text>
</comment>
<comment type="sequence caution" evidence="2">
    <conflict type="erroneous initiation">
        <sequence resource="EMBL-CDS" id="AAT10532"/>
    </conflict>
</comment>
<feature type="chain" id="PRO_0000183155" description="Holliday junction resolvase">
    <location>
        <begin position="1"/>
        <end position="187"/>
    </location>
</feature>
<protein>
    <recommendedName>
        <fullName>Holliday junction resolvase</fullName>
        <ecNumber>3.1.-.-</ecNumber>
    </recommendedName>
</protein>
<sequence>METLTSSSQSLISSPMSKKDYSSEIICAFDIGAKNPARTVLEVKDNSVRVLDISKLDWSSDWERHIAKDLSQYEYTTVLLERQPRRSPYVKFIYFIKGFLYHTSAAKVICVSPVMSGNSYRDRKKRSVEAFLDWMDTFGLRDSVPDRRKLDDVADSFNLAMRYVLDKWNTNYTPYNRCKSRNYIKKM</sequence>
<organismHost>
    <name type="scientific">Homo sapiens</name>
    <name type="common">Human</name>
    <dbReference type="NCBI Taxonomy" id="9606"/>
</organismHost>
<proteinExistence type="inferred from homology"/>
<keyword id="KW-0227">DNA damage</keyword>
<keyword id="KW-0233">DNA recombination</keyword>
<keyword id="KW-0234">DNA repair</keyword>
<keyword id="KW-0378">Hydrolase</keyword>
<keyword id="KW-0449">Lipoprotein</keyword>
<keyword id="KW-0460">Magnesium</keyword>
<keyword id="KW-0472">Membrane</keyword>
<keyword id="KW-0540">Nuclease</keyword>
<keyword id="KW-0564">Palmitate</keyword>
<dbReference type="EC" id="3.1.-.-"/>
<dbReference type="EMBL" id="U94848">
    <property type="protein sequence ID" value="AAB96524.1"/>
    <property type="molecule type" value="Genomic_DNA"/>
</dbReference>
<dbReference type="EMBL" id="AY603355">
    <property type="protein sequence ID" value="AAT10532.1"/>
    <property type="status" value="ALT_INIT"/>
    <property type="molecule type" value="Genomic_DNA"/>
</dbReference>
<dbReference type="PIR" id="T37409">
    <property type="entry name" value="T37409"/>
</dbReference>
<dbReference type="SMR" id="O57229"/>
<dbReference type="Proteomes" id="UP000159908">
    <property type="component" value="Segment"/>
</dbReference>
<dbReference type="Proteomes" id="UP000172909">
    <property type="component" value="Segment"/>
</dbReference>
<dbReference type="GO" id="GO:0016020">
    <property type="term" value="C:membrane"/>
    <property type="evidence" value="ECO:0007669"/>
    <property type="project" value="UniProtKB-SubCell"/>
</dbReference>
<dbReference type="GO" id="GO:0000400">
    <property type="term" value="F:four-way junction DNA binding"/>
    <property type="evidence" value="ECO:0007669"/>
    <property type="project" value="InterPro"/>
</dbReference>
<dbReference type="GO" id="GO:0000287">
    <property type="term" value="F:magnesium ion binding"/>
    <property type="evidence" value="ECO:0007669"/>
    <property type="project" value="InterPro"/>
</dbReference>
<dbReference type="GO" id="GO:0004518">
    <property type="term" value="F:nuclease activity"/>
    <property type="evidence" value="ECO:0007669"/>
    <property type="project" value="UniProtKB-KW"/>
</dbReference>
<dbReference type="GO" id="GO:0006310">
    <property type="term" value="P:DNA recombination"/>
    <property type="evidence" value="ECO:0007669"/>
    <property type="project" value="UniProtKB-KW"/>
</dbReference>
<dbReference type="GO" id="GO:0006281">
    <property type="term" value="P:DNA repair"/>
    <property type="evidence" value="ECO:0007669"/>
    <property type="project" value="UniProtKB-KW"/>
</dbReference>
<dbReference type="InterPro" id="IPR006932">
    <property type="entry name" value="HJ-resolvase_A22"/>
</dbReference>
<dbReference type="InterPro" id="IPR012337">
    <property type="entry name" value="RNaseH-like_sf"/>
</dbReference>
<dbReference type="Pfam" id="PF04848">
    <property type="entry name" value="Pox_A22"/>
    <property type="match status" value="1"/>
</dbReference>
<dbReference type="SUPFAM" id="SSF53098">
    <property type="entry name" value="Ribonuclease H-like"/>
    <property type="match status" value="1"/>
</dbReference>
<reference key="1">
    <citation type="journal article" date="1998" name="Virology">
        <title>The complete genomic sequence of the modified vaccinia Ankara strain: comparison with other orthopoxviruses.</title>
        <authorList>
            <person name="Antoine G."/>
            <person name="Scheiflinger F."/>
            <person name="Dorner F."/>
            <person name="Falkner F.G."/>
        </authorList>
    </citation>
    <scope>NUCLEOTIDE SEQUENCE [GENOMIC DNA]</scope>
    <source>
        <strain>Ankara</strain>
    </source>
</reference>
<reference key="2">
    <citation type="submission" date="2004-04" db="EMBL/GenBank/DDBJ databases">
        <authorList>
            <person name="Esposito J.J."/>
            <person name="Frace M."/>
            <person name="Sammons S.A."/>
            <person name="Olsen-Rasmussen M.S."/>
            <person name="Osborne J."/>
            <person name="Khristova M."/>
            <person name="Wohlhueter R.M."/>
        </authorList>
    </citation>
    <scope>NUCLEOTIDE SEQUENCE [LARGE SCALE GENOMIC DNA]</scope>
    <source>
        <strain>Isolate Acambis 3000</strain>
    </source>
</reference>
<accession>O57229</accession>
<accession>Q6J396</accession>
<gene>
    <name type="ordered locus">MVA133R</name>
    <name type="ordered locus">ACAM3000_MVA_133</name>
</gene>